<sequence>MKVVVMGDSDTVTGFRLAGVHEAYEFDFSELSIERARNKLKELVERDDVGIILITERLAQRIGDLPQVNLPIILQIPDKFGSIYGEELLREIVRKAVGIEIKR</sequence>
<comment type="function">
    <text evidence="1">Component of the A-type ATP synthase that produces ATP from ADP in the presence of a proton gradient across the membrane.</text>
</comment>
<comment type="subunit">
    <text evidence="1">Has multiple subunits with at least A(3), B(3), C, D, E, F, H, I and proteolipid K(x).</text>
</comment>
<comment type="subcellular location">
    <subcellularLocation>
        <location evidence="1">Cell membrane</location>
        <topology evidence="1">Peripheral membrane protein</topology>
    </subcellularLocation>
</comment>
<comment type="similarity">
    <text evidence="1">Belongs to the V-ATPase F subunit family.</text>
</comment>
<protein>
    <recommendedName>
        <fullName evidence="1">A-type ATP synthase subunit F</fullName>
    </recommendedName>
</protein>
<accession>Q9UXU6</accession>
<accession>G8ZKU5</accession>
<gene>
    <name evidence="1" type="primary">atpF</name>
    <name type="ordered locus">PYRAB17620</name>
    <name type="ORF">PAB1184</name>
</gene>
<organism>
    <name type="scientific">Pyrococcus abyssi (strain GE5 / Orsay)</name>
    <dbReference type="NCBI Taxonomy" id="272844"/>
    <lineage>
        <taxon>Archaea</taxon>
        <taxon>Methanobacteriati</taxon>
        <taxon>Methanobacteriota</taxon>
        <taxon>Thermococci</taxon>
        <taxon>Thermococcales</taxon>
        <taxon>Thermococcaceae</taxon>
        <taxon>Pyrococcus</taxon>
    </lineage>
</organism>
<evidence type="ECO:0000255" key="1">
    <source>
        <dbReference type="HAMAP-Rule" id="MF_00312"/>
    </source>
</evidence>
<dbReference type="EMBL" id="AJ248288">
    <property type="protein sequence ID" value="CAB50667.1"/>
    <property type="molecule type" value="Genomic_DNA"/>
</dbReference>
<dbReference type="EMBL" id="HE613800">
    <property type="protein sequence ID" value="CCE71236.1"/>
    <property type="molecule type" value="Genomic_DNA"/>
</dbReference>
<dbReference type="PIR" id="E75028">
    <property type="entry name" value="E75028"/>
</dbReference>
<dbReference type="RefSeq" id="WP_010868881.1">
    <property type="nucleotide sequence ID" value="NC_000868.1"/>
</dbReference>
<dbReference type="SMR" id="Q9UXU6"/>
<dbReference type="STRING" id="272844.PAB1184"/>
<dbReference type="KEGG" id="pab:PAB1184"/>
<dbReference type="PATRIC" id="fig|272844.11.peg.1881"/>
<dbReference type="eggNOG" id="arCOG04102">
    <property type="taxonomic scope" value="Archaea"/>
</dbReference>
<dbReference type="HOGENOM" id="CLU_135754_2_0_2"/>
<dbReference type="OrthoDB" id="24971at2157"/>
<dbReference type="PhylomeDB" id="Q9UXU6"/>
<dbReference type="Proteomes" id="UP000000810">
    <property type="component" value="Chromosome"/>
</dbReference>
<dbReference type="Proteomes" id="UP000009139">
    <property type="component" value="Chromosome"/>
</dbReference>
<dbReference type="GO" id="GO:0005886">
    <property type="term" value="C:plasma membrane"/>
    <property type="evidence" value="ECO:0007669"/>
    <property type="project" value="UniProtKB-SubCell"/>
</dbReference>
<dbReference type="GO" id="GO:0005524">
    <property type="term" value="F:ATP binding"/>
    <property type="evidence" value="ECO:0007669"/>
    <property type="project" value="UniProtKB-UniRule"/>
</dbReference>
<dbReference type="GO" id="GO:0046933">
    <property type="term" value="F:proton-transporting ATP synthase activity, rotational mechanism"/>
    <property type="evidence" value="ECO:0007669"/>
    <property type="project" value="UniProtKB-UniRule"/>
</dbReference>
<dbReference type="GO" id="GO:0046961">
    <property type="term" value="F:proton-transporting ATPase activity, rotational mechanism"/>
    <property type="evidence" value="ECO:0007669"/>
    <property type="project" value="InterPro"/>
</dbReference>
<dbReference type="GO" id="GO:0042777">
    <property type="term" value="P:proton motive force-driven plasma membrane ATP synthesis"/>
    <property type="evidence" value="ECO:0007669"/>
    <property type="project" value="UniProtKB-UniRule"/>
</dbReference>
<dbReference type="Gene3D" id="3.40.50.10580">
    <property type="entry name" value="ATPase, V1 complex, subunit F"/>
    <property type="match status" value="1"/>
</dbReference>
<dbReference type="HAMAP" id="MF_00312">
    <property type="entry name" value="ATP_synth_F_arch"/>
    <property type="match status" value="1"/>
</dbReference>
<dbReference type="InterPro" id="IPR008218">
    <property type="entry name" value="ATPase_V1-cplx_f_g_su"/>
</dbReference>
<dbReference type="InterPro" id="IPR022944">
    <property type="entry name" value="ATPase_V1-cplx_fsu_bac/arc"/>
</dbReference>
<dbReference type="InterPro" id="IPR036906">
    <property type="entry name" value="ATPase_V1_fsu_sf"/>
</dbReference>
<dbReference type="NCBIfam" id="NF003047">
    <property type="entry name" value="PRK03957.1"/>
    <property type="match status" value="1"/>
</dbReference>
<dbReference type="Pfam" id="PF01990">
    <property type="entry name" value="ATP-synt_F"/>
    <property type="match status" value="1"/>
</dbReference>
<dbReference type="SUPFAM" id="SSF159468">
    <property type="entry name" value="AtpF-like"/>
    <property type="match status" value="1"/>
</dbReference>
<proteinExistence type="inferred from homology"/>
<feature type="chain" id="PRO_0000144821" description="A-type ATP synthase subunit F">
    <location>
        <begin position="1"/>
        <end position="103"/>
    </location>
</feature>
<name>AATF_PYRAB</name>
<reference key="1">
    <citation type="journal article" date="2003" name="Mol. Microbiol.">
        <title>An integrated analysis of the genome of the hyperthermophilic archaeon Pyrococcus abyssi.</title>
        <authorList>
            <person name="Cohen G.N."/>
            <person name="Barbe V."/>
            <person name="Flament D."/>
            <person name="Galperin M."/>
            <person name="Heilig R."/>
            <person name="Lecompte O."/>
            <person name="Poch O."/>
            <person name="Prieur D."/>
            <person name="Querellou J."/>
            <person name="Ripp R."/>
            <person name="Thierry J.-C."/>
            <person name="Van der Oost J."/>
            <person name="Weissenbach J."/>
            <person name="Zivanovic Y."/>
            <person name="Forterre P."/>
        </authorList>
    </citation>
    <scope>NUCLEOTIDE SEQUENCE [LARGE SCALE GENOMIC DNA]</scope>
    <source>
        <strain>GE5 / Orsay</strain>
    </source>
</reference>
<reference key="2">
    <citation type="journal article" date="2012" name="Curr. Microbiol.">
        <title>Re-annotation of two hyperthermophilic archaea Pyrococcus abyssi GE5 and Pyrococcus furiosus DSM 3638.</title>
        <authorList>
            <person name="Gao J."/>
            <person name="Wang J."/>
        </authorList>
    </citation>
    <scope>GENOME REANNOTATION</scope>
    <source>
        <strain>GE5 / Orsay</strain>
    </source>
</reference>
<keyword id="KW-0066">ATP synthesis</keyword>
<keyword id="KW-1003">Cell membrane</keyword>
<keyword id="KW-0375">Hydrogen ion transport</keyword>
<keyword id="KW-0406">Ion transport</keyword>
<keyword id="KW-0472">Membrane</keyword>
<keyword id="KW-0813">Transport</keyword>